<sequence>MEKSTLLSAVLKHRDALASVAEFLRILAGICWTLNYFSMLRTSQKDKIPSTGIFPLCNDIGWEFIYAFIYPKASAHWEGGVRVWFLVHCIVIFFIIKNAHNEWDYFPLIQRNLYFLYGIVTIGFAIGQYSFAREVGPDLGFFYGGVLCQTLASLGPIAQILSRNSTRGASLLLRAVATFGGFIKLTIYYLTGNAAGPWFESPMCKFYIGLTLILDFTYPICYYVIRRQELVNDEGDKKKKTKSGKAA</sequence>
<dbReference type="EC" id="4.2.3.-" evidence="3"/>
<dbReference type="EMBL" id="AM920437">
    <property type="protein sequence ID" value="CAP99578.1"/>
    <property type="status" value="ALT_SEQ"/>
    <property type="molecule type" value="Genomic_DNA"/>
</dbReference>
<dbReference type="RefSeq" id="XP_002566184.1">
    <property type="nucleotide sequence ID" value="XM_002566138.1"/>
</dbReference>
<dbReference type="STRING" id="500485.B6HV37"/>
<dbReference type="GlyCosmos" id="B6HV37">
    <property type="glycosylation" value="1 site, No reported glycans"/>
</dbReference>
<dbReference type="GeneID" id="8309016"/>
<dbReference type="KEGG" id="pcs:N7525_004097"/>
<dbReference type="HOGENOM" id="CLU_087059_3_0_1"/>
<dbReference type="OrthoDB" id="5294024at2759"/>
<dbReference type="BioCyc" id="PCHR:PC22G22900-MONOMER"/>
<dbReference type="UniPathway" id="UPA00213"/>
<dbReference type="Proteomes" id="UP000000724">
    <property type="component" value="Contig Pc00c22"/>
</dbReference>
<dbReference type="GO" id="GO:0016020">
    <property type="term" value="C:membrane"/>
    <property type="evidence" value="ECO:0007669"/>
    <property type="project" value="UniProtKB-SubCell"/>
</dbReference>
<dbReference type="GO" id="GO:0016829">
    <property type="term" value="F:lyase activity"/>
    <property type="evidence" value="ECO:0007669"/>
    <property type="project" value="UniProtKB-KW"/>
</dbReference>
<dbReference type="GO" id="GO:0016114">
    <property type="term" value="P:terpenoid biosynthetic process"/>
    <property type="evidence" value="ECO:0007669"/>
    <property type="project" value="UniProtKB-UniPathway"/>
</dbReference>
<dbReference type="InterPro" id="IPR039020">
    <property type="entry name" value="PaxB-like"/>
</dbReference>
<dbReference type="PANTHER" id="PTHR42038">
    <property type="match status" value="1"/>
</dbReference>
<dbReference type="PANTHER" id="PTHR42038:SF2">
    <property type="entry name" value="TERPENE CYCLASE AUSL"/>
    <property type="match status" value="1"/>
</dbReference>
<dbReference type="Pfam" id="PF25129">
    <property type="entry name" value="Pyr4-TMTC"/>
    <property type="match status" value="1"/>
</dbReference>
<gene>
    <name evidence="4" type="primary">adrI</name>
    <name type="ORF">Pc22g22900</name>
</gene>
<protein>
    <recommendedName>
        <fullName evidence="4">Terpene cyclase adrI</fullName>
        <ecNumber evidence="3">4.2.3.-</ecNumber>
    </recommendedName>
    <alternativeName>
        <fullName evidence="4">Andrastin A biosynthesis cluster protein I</fullName>
    </alternativeName>
</protein>
<feature type="chain" id="PRO_0000446494" description="Terpene cyclase adrI">
    <location>
        <begin position="1"/>
        <end position="247"/>
    </location>
</feature>
<feature type="transmembrane region" description="Helical" evidence="1">
    <location>
        <begin position="20"/>
        <end position="40"/>
    </location>
</feature>
<feature type="transmembrane region" description="Helical" evidence="1">
    <location>
        <begin position="51"/>
        <end position="71"/>
    </location>
</feature>
<feature type="transmembrane region" description="Helical" evidence="1">
    <location>
        <begin position="76"/>
        <end position="96"/>
    </location>
</feature>
<feature type="transmembrane region" description="Helical" evidence="1">
    <location>
        <begin position="112"/>
        <end position="132"/>
    </location>
</feature>
<feature type="transmembrane region" description="Helical" evidence="1">
    <location>
        <begin position="141"/>
        <end position="161"/>
    </location>
</feature>
<feature type="transmembrane region" description="Helical" evidence="1">
    <location>
        <begin position="179"/>
        <end position="199"/>
    </location>
</feature>
<feature type="transmembrane region" description="Helical" evidence="1">
    <location>
        <begin position="205"/>
        <end position="225"/>
    </location>
</feature>
<feature type="glycosylation site" description="N-linked (GlcNAc...) asparagine" evidence="2">
    <location>
        <position position="164"/>
    </location>
</feature>
<comment type="function">
    <text evidence="3">Terpene cyclase; part of the gene cluster that mediates the biosynthesis of andrastins, meroterpenoid compounds that exhibit inhibitory activity against ras farnesyltransferase, suggesting that they could be promising leads for antitumor agents (Ref.2). The first step of the pathway is the synthesis of 3,5-dimethylorsellinic acid (DMOA) by the polyketide synthase adrD via condensation of one acetyl-CoA starter unit with 3 malonyl-CoA units and 2 methylations (Ref.2). DMAO is then converted to farnesyl-DMAO by the prenyltransferase adrG (Ref.2). The methyltransferase adrK catalyzes the methylation of the carboxyl group of farnesyl-DMAO to farnesyl-DMAO methyl ester which is further converted to epoxyfarnesyl-DMAO methyl ester by the FAD-dependent monooxygenase adrH (Ref.2). The terpene cyclase adrI then catalyzes the carbon skeletal rearrangement to generate the andrastin E, the first compound in the pathway having the andrastin scaffold, with the tetracyclic ring system (Ref.2). The post-cyclization tailoring enzymes adrF, adrE, adrJ, and adrA, are involved in the conversion of andrastin E into andrastin A. The short chain dehydrogenase adrF is responsible for the oxidation of the C-3 a hydroxyl group of andrastin E to yield the corresponding ketone, andrastin D. The ketoreductase adrE stereoselectively reduces the carbonyl moiety to reverse the stereochemistry of the C-3 position to yield andrastin F. The acetyltransferase adrJ is the acetyltransferase that attaches the acetyl group to the C-3 hydroxyl group of andrastin F to yield andrastin C. Finally, the cytochrome P450 monooxygenase adrA catalyzes two sequential oxidation reactions of the C-23 methyl group, to generate the corresponding alcohol andrastin B, and aldehyde andrastin A (Ref.2).</text>
</comment>
<comment type="pathway">
    <text evidence="3">Secondary metabolite biosynthesis; terpenoid biosynthesis.</text>
</comment>
<comment type="subcellular location">
    <subcellularLocation>
        <location evidence="1">Membrane</location>
        <topology evidence="1">Multi-pass membrane protein</topology>
    </subcellularLocation>
</comment>
<comment type="similarity">
    <text evidence="5">Belongs to the paxB family.</text>
</comment>
<comment type="sequence caution" evidence="6">
    <conflict type="erroneous gene model prediction">
        <sequence resource="EMBL-CDS" id="CAP99578"/>
    </conflict>
</comment>
<name>ADRI_PENRW</name>
<keyword id="KW-0325">Glycoprotein</keyword>
<keyword id="KW-0456">Lyase</keyword>
<keyword id="KW-0472">Membrane</keyword>
<keyword id="KW-1185">Reference proteome</keyword>
<keyword id="KW-0812">Transmembrane</keyword>
<keyword id="KW-1133">Transmembrane helix</keyword>
<reference key="1">
    <citation type="journal article" date="2008" name="Nat. Biotechnol.">
        <title>Genome sequencing and analysis of the filamentous fungus Penicillium chrysogenum.</title>
        <authorList>
            <person name="van den Berg M.A."/>
            <person name="Albang R."/>
            <person name="Albermann K."/>
            <person name="Badger J.H."/>
            <person name="Daran J.-M."/>
            <person name="Driessen A.J.M."/>
            <person name="Garcia-Estrada C."/>
            <person name="Fedorova N.D."/>
            <person name="Harris D.M."/>
            <person name="Heijne W.H.M."/>
            <person name="Joardar V.S."/>
            <person name="Kiel J.A.K.W."/>
            <person name="Kovalchuk A."/>
            <person name="Martin J.F."/>
            <person name="Nierman W.C."/>
            <person name="Nijland J.G."/>
            <person name="Pronk J.T."/>
            <person name="Roubos J.A."/>
            <person name="van der Klei I.J."/>
            <person name="van Peij N.N.M.E."/>
            <person name="Veenhuis M."/>
            <person name="von Doehren H."/>
            <person name="Wagner C."/>
            <person name="Wortman J.R."/>
            <person name="Bovenberg R.A.L."/>
        </authorList>
    </citation>
    <scope>NUCLEOTIDE SEQUENCE [LARGE SCALE GENOMIC DNA]</scope>
    <source>
        <strain>ATCC 28089 / DSM 1075 / NRRL 1951 / Wisconsin 54-1255</strain>
    </source>
</reference>
<reference key="2">
    <citation type="journal article" date="2013" name="Tetrahedron">
        <title>Reconstituted biosynthesis of fungal meroterpenoid andrastin A.</title>
        <authorList>
            <person name="Matsuda Y."/>
            <person name="Awakawa T."/>
            <person name="Abe I."/>
        </authorList>
    </citation>
    <scope>IDENTIFICATION</scope>
    <scope>FUNCTION</scope>
    <scope>CATALYTIC ACTIVITY</scope>
    <scope>PATHWAY</scope>
</reference>
<evidence type="ECO:0000255" key="1"/>
<evidence type="ECO:0000255" key="2">
    <source>
        <dbReference type="PROSITE-ProRule" id="PRU00498"/>
    </source>
</evidence>
<evidence type="ECO:0000269" key="3">
    <source ref="2"/>
</evidence>
<evidence type="ECO:0000303" key="4">
    <source ref="2"/>
</evidence>
<evidence type="ECO:0000305" key="5"/>
<evidence type="ECO:0000305" key="6">
    <source ref="2"/>
</evidence>
<proteinExistence type="evidence at protein level"/>
<organism>
    <name type="scientific">Penicillium rubens (strain ATCC 28089 / DSM 1075 / NRRL 1951 / Wisconsin 54-1255)</name>
    <name type="common">Penicillium chrysogenum</name>
    <dbReference type="NCBI Taxonomy" id="500485"/>
    <lineage>
        <taxon>Eukaryota</taxon>
        <taxon>Fungi</taxon>
        <taxon>Dikarya</taxon>
        <taxon>Ascomycota</taxon>
        <taxon>Pezizomycotina</taxon>
        <taxon>Eurotiomycetes</taxon>
        <taxon>Eurotiomycetidae</taxon>
        <taxon>Eurotiales</taxon>
        <taxon>Aspergillaceae</taxon>
        <taxon>Penicillium</taxon>
        <taxon>Penicillium chrysogenum species complex</taxon>
    </lineage>
</organism>
<accession>B6HV37</accession>